<gene>
    <name evidence="1" type="primary">rph</name>
    <name type="ordered locus">Sala_0254</name>
</gene>
<evidence type="ECO:0000255" key="1">
    <source>
        <dbReference type="HAMAP-Rule" id="MF_00564"/>
    </source>
</evidence>
<name>RNPH_SPHAL</name>
<dbReference type="EC" id="2.7.7.56" evidence="1"/>
<dbReference type="EMBL" id="CP000356">
    <property type="protein sequence ID" value="ABF51977.1"/>
    <property type="molecule type" value="Genomic_DNA"/>
</dbReference>
<dbReference type="RefSeq" id="WP_011540569.1">
    <property type="nucleotide sequence ID" value="NC_008048.1"/>
</dbReference>
<dbReference type="SMR" id="Q1GWJ5"/>
<dbReference type="STRING" id="317655.Sala_0254"/>
<dbReference type="KEGG" id="sal:Sala_0254"/>
<dbReference type="eggNOG" id="COG0689">
    <property type="taxonomic scope" value="Bacteria"/>
</dbReference>
<dbReference type="HOGENOM" id="CLU_050858_0_0_5"/>
<dbReference type="OrthoDB" id="9802265at2"/>
<dbReference type="Proteomes" id="UP000006578">
    <property type="component" value="Chromosome"/>
</dbReference>
<dbReference type="GO" id="GO:0000175">
    <property type="term" value="F:3'-5'-RNA exonuclease activity"/>
    <property type="evidence" value="ECO:0007669"/>
    <property type="project" value="UniProtKB-UniRule"/>
</dbReference>
<dbReference type="GO" id="GO:0000049">
    <property type="term" value="F:tRNA binding"/>
    <property type="evidence" value="ECO:0007669"/>
    <property type="project" value="UniProtKB-UniRule"/>
</dbReference>
<dbReference type="GO" id="GO:0009022">
    <property type="term" value="F:tRNA nucleotidyltransferase activity"/>
    <property type="evidence" value="ECO:0007669"/>
    <property type="project" value="UniProtKB-UniRule"/>
</dbReference>
<dbReference type="GO" id="GO:0016075">
    <property type="term" value="P:rRNA catabolic process"/>
    <property type="evidence" value="ECO:0007669"/>
    <property type="project" value="UniProtKB-UniRule"/>
</dbReference>
<dbReference type="GO" id="GO:0006364">
    <property type="term" value="P:rRNA processing"/>
    <property type="evidence" value="ECO:0007669"/>
    <property type="project" value="UniProtKB-KW"/>
</dbReference>
<dbReference type="GO" id="GO:0008033">
    <property type="term" value="P:tRNA processing"/>
    <property type="evidence" value="ECO:0007669"/>
    <property type="project" value="UniProtKB-UniRule"/>
</dbReference>
<dbReference type="CDD" id="cd11362">
    <property type="entry name" value="RNase_PH_bact"/>
    <property type="match status" value="1"/>
</dbReference>
<dbReference type="FunFam" id="3.30.230.70:FF:000003">
    <property type="entry name" value="Ribonuclease PH"/>
    <property type="match status" value="1"/>
</dbReference>
<dbReference type="Gene3D" id="3.30.230.70">
    <property type="entry name" value="GHMP Kinase, N-terminal domain"/>
    <property type="match status" value="1"/>
</dbReference>
<dbReference type="HAMAP" id="MF_00564">
    <property type="entry name" value="RNase_PH"/>
    <property type="match status" value="1"/>
</dbReference>
<dbReference type="InterPro" id="IPR001247">
    <property type="entry name" value="ExoRNase_PH_dom1"/>
</dbReference>
<dbReference type="InterPro" id="IPR015847">
    <property type="entry name" value="ExoRNase_PH_dom2"/>
</dbReference>
<dbReference type="InterPro" id="IPR036345">
    <property type="entry name" value="ExoRNase_PH_dom2_sf"/>
</dbReference>
<dbReference type="InterPro" id="IPR027408">
    <property type="entry name" value="PNPase/RNase_PH_dom_sf"/>
</dbReference>
<dbReference type="InterPro" id="IPR020568">
    <property type="entry name" value="Ribosomal_Su5_D2-typ_SF"/>
</dbReference>
<dbReference type="InterPro" id="IPR050080">
    <property type="entry name" value="RNase_PH"/>
</dbReference>
<dbReference type="InterPro" id="IPR002381">
    <property type="entry name" value="RNase_PH_bac-type"/>
</dbReference>
<dbReference type="InterPro" id="IPR018336">
    <property type="entry name" value="RNase_PH_CS"/>
</dbReference>
<dbReference type="NCBIfam" id="TIGR01966">
    <property type="entry name" value="RNasePH"/>
    <property type="match status" value="1"/>
</dbReference>
<dbReference type="PANTHER" id="PTHR11953">
    <property type="entry name" value="EXOSOME COMPLEX COMPONENT"/>
    <property type="match status" value="1"/>
</dbReference>
<dbReference type="PANTHER" id="PTHR11953:SF0">
    <property type="entry name" value="EXOSOME COMPLEX COMPONENT RRP41"/>
    <property type="match status" value="1"/>
</dbReference>
<dbReference type="Pfam" id="PF01138">
    <property type="entry name" value="RNase_PH"/>
    <property type="match status" value="1"/>
</dbReference>
<dbReference type="Pfam" id="PF03725">
    <property type="entry name" value="RNase_PH_C"/>
    <property type="match status" value="1"/>
</dbReference>
<dbReference type="SUPFAM" id="SSF55666">
    <property type="entry name" value="Ribonuclease PH domain 2-like"/>
    <property type="match status" value="1"/>
</dbReference>
<dbReference type="SUPFAM" id="SSF54211">
    <property type="entry name" value="Ribosomal protein S5 domain 2-like"/>
    <property type="match status" value="1"/>
</dbReference>
<dbReference type="PROSITE" id="PS01277">
    <property type="entry name" value="RIBONUCLEASE_PH"/>
    <property type="match status" value="1"/>
</dbReference>
<organism>
    <name type="scientific">Sphingopyxis alaskensis (strain DSM 13593 / LMG 18877 / RB2256)</name>
    <name type="common">Sphingomonas alaskensis</name>
    <dbReference type="NCBI Taxonomy" id="317655"/>
    <lineage>
        <taxon>Bacteria</taxon>
        <taxon>Pseudomonadati</taxon>
        <taxon>Pseudomonadota</taxon>
        <taxon>Alphaproteobacteria</taxon>
        <taxon>Sphingomonadales</taxon>
        <taxon>Sphingomonadaceae</taxon>
        <taxon>Sphingopyxis</taxon>
    </lineage>
</organism>
<feature type="chain" id="PRO_1000024898" description="Ribonuclease PH">
    <location>
        <begin position="1"/>
        <end position="238"/>
    </location>
</feature>
<feature type="binding site" evidence="1">
    <location>
        <position position="86"/>
    </location>
    <ligand>
        <name>phosphate</name>
        <dbReference type="ChEBI" id="CHEBI:43474"/>
        <note>substrate</note>
    </ligand>
</feature>
<feature type="binding site" evidence="1">
    <location>
        <begin position="124"/>
        <end position="126"/>
    </location>
    <ligand>
        <name>phosphate</name>
        <dbReference type="ChEBI" id="CHEBI:43474"/>
        <note>substrate</note>
    </ligand>
</feature>
<sequence length="238" mass="25509">MRPSGRAADQMRPIAIETNFTIHAEGSVLVSFGNTRVLVTASVEEKVPPFLRGKGQGWVTAEYGMLPRATHTRGSREAAKGKQSGRTQEIQRLIGRSLRAVVDMQKLGERQIVIDCDVIQADGGTRTASISGAWVALRLAVDKLIEAKQLTEDPIVDSVAAISCGIYKGTPVLDLDYDEDSVAEADGNFVLTGKGQIVEVQASAEGATYDEEGLLRLLRLARIGCGEIFAAQAKAVGR</sequence>
<accession>Q1GWJ5</accession>
<reference key="1">
    <citation type="journal article" date="2009" name="Proc. Natl. Acad. Sci. U.S.A.">
        <title>The genomic basis of trophic strategy in marine bacteria.</title>
        <authorList>
            <person name="Lauro F.M."/>
            <person name="McDougald D."/>
            <person name="Thomas T."/>
            <person name="Williams T.J."/>
            <person name="Egan S."/>
            <person name="Rice S."/>
            <person name="DeMaere M.Z."/>
            <person name="Ting L."/>
            <person name="Ertan H."/>
            <person name="Johnson J."/>
            <person name="Ferriera S."/>
            <person name="Lapidus A."/>
            <person name="Anderson I."/>
            <person name="Kyrpides N."/>
            <person name="Munk A.C."/>
            <person name="Detter C."/>
            <person name="Han C.S."/>
            <person name="Brown M.V."/>
            <person name="Robb F.T."/>
            <person name="Kjelleberg S."/>
            <person name="Cavicchioli R."/>
        </authorList>
    </citation>
    <scope>NUCLEOTIDE SEQUENCE [LARGE SCALE GENOMIC DNA]</scope>
    <source>
        <strain>DSM 13593 / LMG 18877 / RB2256</strain>
    </source>
</reference>
<comment type="function">
    <text evidence="1">Phosphorolytic 3'-5' exoribonuclease that plays an important role in tRNA 3'-end maturation. Removes nucleotide residues following the 3'-CCA terminus of tRNAs; can also add nucleotides to the ends of RNA molecules by using nucleoside diphosphates as substrates, but this may not be physiologically important. Probably plays a role in initiation of 16S rRNA degradation (leading to ribosome degradation) during starvation.</text>
</comment>
<comment type="catalytic activity">
    <reaction evidence="1">
        <text>tRNA(n+1) + phosphate = tRNA(n) + a ribonucleoside 5'-diphosphate</text>
        <dbReference type="Rhea" id="RHEA:10628"/>
        <dbReference type="Rhea" id="RHEA-COMP:17343"/>
        <dbReference type="Rhea" id="RHEA-COMP:17344"/>
        <dbReference type="ChEBI" id="CHEBI:43474"/>
        <dbReference type="ChEBI" id="CHEBI:57930"/>
        <dbReference type="ChEBI" id="CHEBI:173114"/>
        <dbReference type="EC" id="2.7.7.56"/>
    </reaction>
</comment>
<comment type="subunit">
    <text evidence="1">Homohexameric ring arranged as a trimer of dimers.</text>
</comment>
<comment type="similarity">
    <text evidence="1">Belongs to the RNase PH family.</text>
</comment>
<keyword id="KW-0548">Nucleotidyltransferase</keyword>
<keyword id="KW-1185">Reference proteome</keyword>
<keyword id="KW-0694">RNA-binding</keyword>
<keyword id="KW-0698">rRNA processing</keyword>
<keyword id="KW-0808">Transferase</keyword>
<keyword id="KW-0819">tRNA processing</keyword>
<keyword id="KW-0820">tRNA-binding</keyword>
<proteinExistence type="inferred from homology"/>
<protein>
    <recommendedName>
        <fullName evidence="1">Ribonuclease PH</fullName>
        <shortName evidence="1">RNase PH</shortName>
        <ecNumber evidence="1">2.7.7.56</ecNumber>
    </recommendedName>
    <alternativeName>
        <fullName evidence="1">tRNA nucleotidyltransferase</fullName>
    </alternativeName>
</protein>